<comment type="function">
    <text evidence="1">Catalyzes a mechanistically unusual reaction, the ATP-dependent insertion of CO2 between the N7 and N8 nitrogen atoms of 7,8-diaminopelargonic acid (DAPA, also called 7,8-diammoniononanoate) to form a ureido ring.</text>
</comment>
<comment type="catalytic activity">
    <reaction evidence="1">
        <text>(7R,8S)-7,8-diammoniononanoate + CO2 + ATP = (4R,5S)-dethiobiotin + ADP + phosphate + 3 H(+)</text>
        <dbReference type="Rhea" id="RHEA:15805"/>
        <dbReference type="ChEBI" id="CHEBI:15378"/>
        <dbReference type="ChEBI" id="CHEBI:16526"/>
        <dbReference type="ChEBI" id="CHEBI:30616"/>
        <dbReference type="ChEBI" id="CHEBI:43474"/>
        <dbReference type="ChEBI" id="CHEBI:149469"/>
        <dbReference type="ChEBI" id="CHEBI:149473"/>
        <dbReference type="ChEBI" id="CHEBI:456216"/>
        <dbReference type="EC" id="6.3.3.3"/>
    </reaction>
</comment>
<comment type="cofactor">
    <cofactor evidence="1">
        <name>Mg(2+)</name>
        <dbReference type="ChEBI" id="CHEBI:18420"/>
    </cofactor>
</comment>
<comment type="pathway">
    <text evidence="1">Cofactor biosynthesis; biotin biosynthesis; biotin from 7,8-diaminononanoate: step 1/2.</text>
</comment>
<comment type="subunit">
    <text evidence="1">Homodimer.</text>
</comment>
<comment type="subcellular location">
    <subcellularLocation>
        <location evidence="1">Cytoplasm</location>
    </subcellularLocation>
</comment>
<comment type="similarity">
    <text evidence="1">Belongs to the dethiobiotin synthetase family.</text>
</comment>
<name>BIOD_RHOPA</name>
<feature type="chain" id="PRO_0000302543" description="ATP-dependent dethiobiotin synthetase BioD">
    <location>
        <begin position="1"/>
        <end position="212"/>
    </location>
</feature>
<feature type="active site" evidence="1">
    <location>
        <position position="33"/>
    </location>
</feature>
<feature type="binding site" evidence="1">
    <location>
        <begin position="13"/>
        <end position="18"/>
    </location>
    <ligand>
        <name>ATP</name>
        <dbReference type="ChEBI" id="CHEBI:30616"/>
    </ligand>
</feature>
<feature type="binding site" evidence="1">
    <location>
        <position position="17"/>
    </location>
    <ligand>
        <name>Mg(2+)</name>
        <dbReference type="ChEBI" id="CHEBI:18420"/>
    </ligand>
</feature>
<feature type="binding site" evidence="1">
    <location>
        <position position="37"/>
    </location>
    <ligand>
        <name>substrate</name>
    </ligand>
</feature>
<feature type="binding site" evidence="1">
    <location>
        <begin position="100"/>
        <end position="103"/>
    </location>
    <ligand>
        <name>ATP</name>
        <dbReference type="ChEBI" id="CHEBI:30616"/>
    </ligand>
</feature>
<feature type="binding site" evidence="1">
    <location>
        <position position="100"/>
    </location>
    <ligand>
        <name>Mg(2+)</name>
        <dbReference type="ChEBI" id="CHEBI:18420"/>
    </ligand>
</feature>
<feature type="binding site" evidence="1">
    <location>
        <begin position="184"/>
        <end position="186"/>
    </location>
    <ligand>
        <name>ATP</name>
        <dbReference type="ChEBI" id="CHEBI:30616"/>
    </ligand>
</feature>
<accession>Q6N5K3</accession>
<proteinExistence type="inferred from homology"/>
<evidence type="ECO:0000255" key="1">
    <source>
        <dbReference type="HAMAP-Rule" id="MF_00336"/>
    </source>
</evidence>
<dbReference type="EC" id="6.3.3.3" evidence="1"/>
<dbReference type="EMBL" id="BX572602">
    <property type="protein sequence ID" value="CAE28412.1"/>
    <property type="molecule type" value="Genomic_DNA"/>
</dbReference>
<dbReference type="RefSeq" id="WP_011158520.1">
    <property type="nucleotide sequence ID" value="NZ_CP116810.1"/>
</dbReference>
<dbReference type="SMR" id="Q6N5K3"/>
<dbReference type="STRING" id="258594.RPA2971"/>
<dbReference type="GeneID" id="66894058"/>
<dbReference type="eggNOG" id="COG0132">
    <property type="taxonomic scope" value="Bacteria"/>
</dbReference>
<dbReference type="HOGENOM" id="CLU_072551_2_0_5"/>
<dbReference type="PhylomeDB" id="Q6N5K3"/>
<dbReference type="UniPathway" id="UPA00078">
    <property type="reaction ID" value="UER00161"/>
</dbReference>
<dbReference type="GO" id="GO:0005829">
    <property type="term" value="C:cytosol"/>
    <property type="evidence" value="ECO:0007669"/>
    <property type="project" value="TreeGrafter"/>
</dbReference>
<dbReference type="GO" id="GO:0005524">
    <property type="term" value="F:ATP binding"/>
    <property type="evidence" value="ECO:0007669"/>
    <property type="project" value="UniProtKB-UniRule"/>
</dbReference>
<dbReference type="GO" id="GO:0004141">
    <property type="term" value="F:dethiobiotin synthase activity"/>
    <property type="evidence" value="ECO:0007669"/>
    <property type="project" value="UniProtKB-UniRule"/>
</dbReference>
<dbReference type="GO" id="GO:0000287">
    <property type="term" value="F:magnesium ion binding"/>
    <property type="evidence" value="ECO:0007669"/>
    <property type="project" value="UniProtKB-UniRule"/>
</dbReference>
<dbReference type="GO" id="GO:0009102">
    <property type="term" value="P:biotin biosynthetic process"/>
    <property type="evidence" value="ECO:0007669"/>
    <property type="project" value="UniProtKB-UniRule"/>
</dbReference>
<dbReference type="CDD" id="cd03109">
    <property type="entry name" value="DTBS"/>
    <property type="match status" value="1"/>
</dbReference>
<dbReference type="Gene3D" id="3.40.50.300">
    <property type="entry name" value="P-loop containing nucleotide triphosphate hydrolases"/>
    <property type="match status" value="1"/>
</dbReference>
<dbReference type="HAMAP" id="MF_00336">
    <property type="entry name" value="BioD"/>
    <property type="match status" value="1"/>
</dbReference>
<dbReference type="InterPro" id="IPR004472">
    <property type="entry name" value="DTB_synth_BioD"/>
</dbReference>
<dbReference type="InterPro" id="IPR027417">
    <property type="entry name" value="P-loop_NTPase"/>
</dbReference>
<dbReference type="NCBIfam" id="TIGR00347">
    <property type="entry name" value="bioD"/>
    <property type="match status" value="1"/>
</dbReference>
<dbReference type="PANTHER" id="PTHR43210:SF2">
    <property type="entry name" value="ATP-DEPENDENT DETHIOBIOTIN SYNTHETASE BIOD 2"/>
    <property type="match status" value="1"/>
</dbReference>
<dbReference type="PANTHER" id="PTHR43210">
    <property type="entry name" value="DETHIOBIOTIN SYNTHETASE"/>
    <property type="match status" value="1"/>
</dbReference>
<dbReference type="Pfam" id="PF13500">
    <property type="entry name" value="AAA_26"/>
    <property type="match status" value="1"/>
</dbReference>
<dbReference type="PIRSF" id="PIRSF006755">
    <property type="entry name" value="DTB_synth"/>
    <property type="match status" value="1"/>
</dbReference>
<dbReference type="SUPFAM" id="SSF52540">
    <property type="entry name" value="P-loop containing nucleoside triphosphate hydrolases"/>
    <property type="match status" value="1"/>
</dbReference>
<keyword id="KW-0067">ATP-binding</keyword>
<keyword id="KW-0093">Biotin biosynthesis</keyword>
<keyword id="KW-0963">Cytoplasm</keyword>
<keyword id="KW-0436">Ligase</keyword>
<keyword id="KW-0460">Magnesium</keyword>
<keyword id="KW-0479">Metal-binding</keyword>
<keyword id="KW-0547">Nucleotide-binding</keyword>
<sequence>MSARIVVTGTDTGIGKTVFAAALAGALDATYWKPVQSGLEDETDSGAVQRLSGLAADRILPERYRLQTPASPHLAAEIDGVDIDVAALELPSVSRPLVVEGAGGLMVPLTRETTYIDVFARWAAPLVLCARTSLGTINHTLLSIEAIRARDIPLLGVAFLGDENLDSEQIIVELGHTRRLGRLPRLERLDAAALRAGFAAAFEPRDFLGDAP</sequence>
<gene>
    <name evidence="1" type="primary">bioD</name>
    <name type="ordered locus">RPA2971</name>
</gene>
<protein>
    <recommendedName>
        <fullName evidence="1">ATP-dependent dethiobiotin synthetase BioD</fullName>
        <ecNumber evidence="1">6.3.3.3</ecNumber>
    </recommendedName>
    <alternativeName>
        <fullName evidence="1">DTB synthetase</fullName>
        <shortName evidence="1">DTBS</shortName>
    </alternativeName>
    <alternativeName>
        <fullName evidence="1">Dethiobiotin synthase</fullName>
    </alternativeName>
</protein>
<reference key="1">
    <citation type="journal article" date="2004" name="Nat. Biotechnol.">
        <title>Complete genome sequence of the metabolically versatile photosynthetic bacterium Rhodopseudomonas palustris.</title>
        <authorList>
            <person name="Larimer F.W."/>
            <person name="Chain P."/>
            <person name="Hauser L."/>
            <person name="Lamerdin J.E."/>
            <person name="Malfatti S."/>
            <person name="Do L."/>
            <person name="Land M.L."/>
            <person name="Pelletier D.A."/>
            <person name="Beatty J.T."/>
            <person name="Lang A.S."/>
            <person name="Tabita F.R."/>
            <person name="Gibson J.L."/>
            <person name="Hanson T.E."/>
            <person name="Bobst C."/>
            <person name="Torres y Torres J.L."/>
            <person name="Peres C."/>
            <person name="Harrison F.H."/>
            <person name="Gibson J."/>
            <person name="Harwood C.S."/>
        </authorList>
    </citation>
    <scope>NUCLEOTIDE SEQUENCE [LARGE SCALE GENOMIC DNA]</scope>
    <source>
        <strain>ATCC BAA-98 / CGA009</strain>
    </source>
</reference>
<organism>
    <name type="scientific">Rhodopseudomonas palustris (strain ATCC BAA-98 / CGA009)</name>
    <dbReference type="NCBI Taxonomy" id="258594"/>
    <lineage>
        <taxon>Bacteria</taxon>
        <taxon>Pseudomonadati</taxon>
        <taxon>Pseudomonadota</taxon>
        <taxon>Alphaproteobacteria</taxon>
        <taxon>Hyphomicrobiales</taxon>
        <taxon>Nitrobacteraceae</taxon>
        <taxon>Rhodopseudomonas</taxon>
    </lineage>
</organism>